<proteinExistence type="inferred from homology"/>
<comment type="function">
    <text evidence="1">NDH-1 shuttles electrons from NADH, via FMN and iron-sulfur (Fe-S) centers, to quinones in the respiratory chain. The immediate electron acceptor for the enzyme in this species is believed to be ubiquinone. Couples the redox reaction to proton translocation (for every two electrons transferred, four hydrogen ions are translocated across the cytoplasmic membrane), and thus conserves the redox energy in a proton gradient.</text>
</comment>
<comment type="catalytic activity">
    <reaction evidence="1">
        <text>a quinone + NADH + 5 H(+)(in) = a quinol + NAD(+) + 4 H(+)(out)</text>
        <dbReference type="Rhea" id="RHEA:57888"/>
        <dbReference type="ChEBI" id="CHEBI:15378"/>
        <dbReference type="ChEBI" id="CHEBI:24646"/>
        <dbReference type="ChEBI" id="CHEBI:57540"/>
        <dbReference type="ChEBI" id="CHEBI:57945"/>
        <dbReference type="ChEBI" id="CHEBI:132124"/>
    </reaction>
</comment>
<comment type="cofactor">
    <cofactor evidence="1">
        <name>[4Fe-4S] cluster</name>
        <dbReference type="ChEBI" id="CHEBI:49883"/>
    </cofactor>
    <text evidence="1">Binds 1 [4Fe-4S] cluster.</text>
</comment>
<comment type="subunit">
    <text evidence="1">NDH-1 is composed of 13 different subunits. Subunits NuoB, CD, E, F, and G constitute the peripheral sector of the complex.</text>
</comment>
<comment type="subcellular location">
    <subcellularLocation>
        <location evidence="1">Cell inner membrane</location>
        <topology evidence="1">Peripheral membrane protein</topology>
        <orientation evidence="1">Cytoplasmic side</orientation>
    </subcellularLocation>
</comment>
<comment type="similarity">
    <text evidence="1">Belongs to the complex I 20 kDa subunit family.</text>
</comment>
<keyword id="KW-0004">4Fe-4S</keyword>
<keyword id="KW-0997">Cell inner membrane</keyword>
<keyword id="KW-1003">Cell membrane</keyword>
<keyword id="KW-0408">Iron</keyword>
<keyword id="KW-0411">Iron-sulfur</keyword>
<keyword id="KW-0472">Membrane</keyword>
<keyword id="KW-0479">Metal-binding</keyword>
<keyword id="KW-0520">NAD</keyword>
<keyword id="KW-0874">Quinone</keyword>
<keyword id="KW-1278">Translocase</keyword>
<keyword id="KW-0813">Transport</keyword>
<keyword id="KW-0830">Ubiquinone</keyword>
<organism>
    <name type="scientific">Escherichia coli O17:K52:H18 (strain UMN026 / ExPEC)</name>
    <dbReference type="NCBI Taxonomy" id="585056"/>
    <lineage>
        <taxon>Bacteria</taxon>
        <taxon>Pseudomonadati</taxon>
        <taxon>Pseudomonadota</taxon>
        <taxon>Gammaproteobacteria</taxon>
        <taxon>Enterobacterales</taxon>
        <taxon>Enterobacteriaceae</taxon>
        <taxon>Escherichia</taxon>
    </lineage>
</organism>
<gene>
    <name evidence="1" type="primary">nuoB</name>
    <name type="ordered locus">ECUMN_2626</name>
</gene>
<dbReference type="EC" id="7.1.1.-" evidence="1"/>
<dbReference type="EMBL" id="CU928163">
    <property type="protein sequence ID" value="CAR13808.1"/>
    <property type="molecule type" value="Genomic_DNA"/>
</dbReference>
<dbReference type="RefSeq" id="WP_000386733.1">
    <property type="nucleotide sequence ID" value="NC_011751.1"/>
</dbReference>
<dbReference type="RefSeq" id="YP_002413336.1">
    <property type="nucleotide sequence ID" value="NC_011751.1"/>
</dbReference>
<dbReference type="SMR" id="B7N5P9"/>
<dbReference type="STRING" id="585056.ECUMN_2626"/>
<dbReference type="GeneID" id="93774887"/>
<dbReference type="KEGG" id="eum:ECUMN_2626"/>
<dbReference type="PATRIC" id="fig|585056.7.peg.2807"/>
<dbReference type="HOGENOM" id="CLU_055737_7_3_6"/>
<dbReference type="Proteomes" id="UP000007097">
    <property type="component" value="Chromosome"/>
</dbReference>
<dbReference type="GO" id="GO:0005886">
    <property type="term" value="C:plasma membrane"/>
    <property type="evidence" value="ECO:0007669"/>
    <property type="project" value="UniProtKB-SubCell"/>
</dbReference>
<dbReference type="GO" id="GO:0045271">
    <property type="term" value="C:respiratory chain complex I"/>
    <property type="evidence" value="ECO:0007669"/>
    <property type="project" value="TreeGrafter"/>
</dbReference>
<dbReference type="GO" id="GO:0051539">
    <property type="term" value="F:4 iron, 4 sulfur cluster binding"/>
    <property type="evidence" value="ECO:0007669"/>
    <property type="project" value="UniProtKB-KW"/>
</dbReference>
<dbReference type="GO" id="GO:0005506">
    <property type="term" value="F:iron ion binding"/>
    <property type="evidence" value="ECO:0007669"/>
    <property type="project" value="UniProtKB-UniRule"/>
</dbReference>
<dbReference type="GO" id="GO:0008137">
    <property type="term" value="F:NADH dehydrogenase (ubiquinone) activity"/>
    <property type="evidence" value="ECO:0007669"/>
    <property type="project" value="InterPro"/>
</dbReference>
<dbReference type="GO" id="GO:0050136">
    <property type="term" value="F:NADH:ubiquinone reductase (non-electrogenic) activity"/>
    <property type="evidence" value="ECO:0007669"/>
    <property type="project" value="UniProtKB-UniRule"/>
</dbReference>
<dbReference type="GO" id="GO:0048038">
    <property type="term" value="F:quinone binding"/>
    <property type="evidence" value="ECO:0007669"/>
    <property type="project" value="UniProtKB-KW"/>
</dbReference>
<dbReference type="GO" id="GO:0009060">
    <property type="term" value="P:aerobic respiration"/>
    <property type="evidence" value="ECO:0007669"/>
    <property type="project" value="TreeGrafter"/>
</dbReference>
<dbReference type="GO" id="GO:0015990">
    <property type="term" value="P:electron transport coupled proton transport"/>
    <property type="evidence" value="ECO:0007669"/>
    <property type="project" value="TreeGrafter"/>
</dbReference>
<dbReference type="FunFam" id="3.40.50.12280:FF:000002">
    <property type="entry name" value="NADH-quinone oxidoreductase subunit B"/>
    <property type="match status" value="1"/>
</dbReference>
<dbReference type="Gene3D" id="3.40.50.12280">
    <property type="match status" value="1"/>
</dbReference>
<dbReference type="HAMAP" id="MF_01356">
    <property type="entry name" value="NDH1_NuoB"/>
    <property type="match status" value="1"/>
</dbReference>
<dbReference type="InterPro" id="IPR006137">
    <property type="entry name" value="NADH_UbQ_OxRdtase-like_20kDa"/>
</dbReference>
<dbReference type="InterPro" id="IPR006138">
    <property type="entry name" value="NADH_UQ_OxRdtase_20Kd_su"/>
</dbReference>
<dbReference type="NCBIfam" id="TIGR01957">
    <property type="entry name" value="nuoB_fam"/>
    <property type="match status" value="1"/>
</dbReference>
<dbReference type="NCBIfam" id="NF005012">
    <property type="entry name" value="PRK06411.1"/>
    <property type="match status" value="1"/>
</dbReference>
<dbReference type="PANTHER" id="PTHR11995">
    <property type="entry name" value="NADH DEHYDROGENASE"/>
    <property type="match status" value="1"/>
</dbReference>
<dbReference type="PANTHER" id="PTHR11995:SF14">
    <property type="entry name" value="NADH DEHYDROGENASE [UBIQUINONE] IRON-SULFUR PROTEIN 7, MITOCHONDRIAL"/>
    <property type="match status" value="1"/>
</dbReference>
<dbReference type="Pfam" id="PF01058">
    <property type="entry name" value="Oxidored_q6"/>
    <property type="match status" value="1"/>
</dbReference>
<dbReference type="SUPFAM" id="SSF56770">
    <property type="entry name" value="HydA/Nqo6-like"/>
    <property type="match status" value="1"/>
</dbReference>
<dbReference type="PROSITE" id="PS01150">
    <property type="entry name" value="COMPLEX1_20K"/>
    <property type="match status" value="1"/>
</dbReference>
<name>NUOB_ECOLU</name>
<reference key="1">
    <citation type="journal article" date="2009" name="PLoS Genet.">
        <title>Organised genome dynamics in the Escherichia coli species results in highly diverse adaptive paths.</title>
        <authorList>
            <person name="Touchon M."/>
            <person name="Hoede C."/>
            <person name="Tenaillon O."/>
            <person name="Barbe V."/>
            <person name="Baeriswyl S."/>
            <person name="Bidet P."/>
            <person name="Bingen E."/>
            <person name="Bonacorsi S."/>
            <person name="Bouchier C."/>
            <person name="Bouvet O."/>
            <person name="Calteau A."/>
            <person name="Chiapello H."/>
            <person name="Clermont O."/>
            <person name="Cruveiller S."/>
            <person name="Danchin A."/>
            <person name="Diard M."/>
            <person name="Dossat C."/>
            <person name="Karoui M.E."/>
            <person name="Frapy E."/>
            <person name="Garry L."/>
            <person name="Ghigo J.M."/>
            <person name="Gilles A.M."/>
            <person name="Johnson J."/>
            <person name="Le Bouguenec C."/>
            <person name="Lescat M."/>
            <person name="Mangenot S."/>
            <person name="Martinez-Jehanne V."/>
            <person name="Matic I."/>
            <person name="Nassif X."/>
            <person name="Oztas S."/>
            <person name="Petit M.A."/>
            <person name="Pichon C."/>
            <person name="Rouy Z."/>
            <person name="Ruf C.S."/>
            <person name="Schneider D."/>
            <person name="Tourret J."/>
            <person name="Vacherie B."/>
            <person name="Vallenet D."/>
            <person name="Medigue C."/>
            <person name="Rocha E.P.C."/>
            <person name="Denamur E."/>
        </authorList>
    </citation>
    <scope>NUCLEOTIDE SEQUENCE [LARGE SCALE GENOMIC DNA]</scope>
    <source>
        <strain>UMN026 / ExPEC</strain>
    </source>
</reference>
<accession>B7N5P9</accession>
<sequence>MDYTLTRIDPNGENDRYPLQKQEIVTDPLEQEVNKNVFMGKLNDMVNWGRKNSIWPYNFGLSCCYVEMVTSFTAVHDVARFGAEVLRASPRQADLMVVAGTCFTKMAPVIQRLYDQMLEPKWVISMGACANSGGMYDIYSVVQGVDKFIPVDVYIPGCPPRPEAYMQALMLLQESIGKERRPLSWVVGDQGVYRANMQSERERKRGERIAVTNLRTPDEI</sequence>
<protein>
    <recommendedName>
        <fullName evidence="1">NADH-quinone oxidoreductase subunit B</fullName>
        <ecNumber evidence="1">7.1.1.-</ecNumber>
    </recommendedName>
    <alternativeName>
        <fullName evidence="1">NADH dehydrogenase I subunit B</fullName>
    </alternativeName>
    <alternativeName>
        <fullName evidence="1">NDH-1 subunit B</fullName>
    </alternativeName>
</protein>
<evidence type="ECO:0000255" key="1">
    <source>
        <dbReference type="HAMAP-Rule" id="MF_01356"/>
    </source>
</evidence>
<feature type="chain" id="PRO_0000376215" description="NADH-quinone oxidoreductase subunit B">
    <location>
        <begin position="1"/>
        <end position="220"/>
    </location>
</feature>
<feature type="binding site" evidence="1">
    <location>
        <position position="63"/>
    </location>
    <ligand>
        <name>[4Fe-4S] cluster</name>
        <dbReference type="ChEBI" id="CHEBI:49883"/>
    </ligand>
</feature>
<feature type="binding site" evidence="1">
    <location>
        <position position="64"/>
    </location>
    <ligand>
        <name>[4Fe-4S] cluster</name>
        <dbReference type="ChEBI" id="CHEBI:49883"/>
    </ligand>
</feature>
<feature type="binding site" evidence="1">
    <location>
        <position position="129"/>
    </location>
    <ligand>
        <name>[4Fe-4S] cluster</name>
        <dbReference type="ChEBI" id="CHEBI:49883"/>
    </ligand>
</feature>
<feature type="binding site" evidence="1">
    <location>
        <position position="158"/>
    </location>
    <ligand>
        <name>[4Fe-4S] cluster</name>
        <dbReference type="ChEBI" id="CHEBI:49883"/>
    </ligand>
</feature>